<protein>
    <recommendedName>
        <fullName evidence="1">Small ribosomal subunit protein uS8</fullName>
    </recommendedName>
    <alternativeName>
        <fullName evidence="2">30S ribosomal protein S8</fullName>
    </alternativeName>
</protein>
<dbReference type="EMBL" id="AE015927">
    <property type="protein sequence ID" value="AAO37046.1"/>
    <property type="molecule type" value="Genomic_DNA"/>
</dbReference>
<dbReference type="RefSeq" id="WP_011100707.1">
    <property type="nucleotide sequence ID" value="NC_004557.1"/>
</dbReference>
<dbReference type="SMR" id="Q890P9"/>
<dbReference type="STRING" id="212717.CTC_02589"/>
<dbReference type="GeneID" id="24254578"/>
<dbReference type="KEGG" id="ctc:CTC_02589"/>
<dbReference type="HOGENOM" id="CLU_098428_0_2_9"/>
<dbReference type="OrthoDB" id="9802617at2"/>
<dbReference type="Proteomes" id="UP000001412">
    <property type="component" value="Chromosome"/>
</dbReference>
<dbReference type="GO" id="GO:1990904">
    <property type="term" value="C:ribonucleoprotein complex"/>
    <property type="evidence" value="ECO:0007669"/>
    <property type="project" value="UniProtKB-KW"/>
</dbReference>
<dbReference type="GO" id="GO:0005840">
    <property type="term" value="C:ribosome"/>
    <property type="evidence" value="ECO:0007669"/>
    <property type="project" value="UniProtKB-KW"/>
</dbReference>
<dbReference type="GO" id="GO:0019843">
    <property type="term" value="F:rRNA binding"/>
    <property type="evidence" value="ECO:0007669"/>
    <property type="project" value="UniProtKB-UniRule"/>
</dbReference>
<dbReference type="GO" id="GO:0003735">
    <property type="term" value="F:structural constituent of ribosome"/>
    <property type="evidence" value="ECO:0007669"/>
    <property type="project" value="InterPro"/>
</dbReference>
<dbReference type="GO" id="GO:0006412">
    <property type="term" value="P:translation"/>
    <property type="evidence" value="ECO:0007669"/>
    <property type="project" value="UniProtKB-UniRule"/>
</dbReference>
<dbReference type="FunFam" id="3.30.1370.30:FF:000002">
    <property type="entry name" value="30S ribosomal protein S8"/>
    <property type="match status" value="1"/>
</dbReference>
<dbReference type="FunFam" id="3.30.1490.10:FF:000001">
    <property type="entry name" value="30S ribosomal protein S8"/>
    <property type="match status" value="1"/>
</dbReference>
<dbReference type="Gene3D" id="3.30.1370.30">
    <property type="match status" value="1"/>
</dbReference>
<dbReference type="Gene3D" id="3.30.1490.10">
    <property type="match status" value="1"/>
</dbReference>
<dbReference type="HAMAP" id="MF_01302_B">
    <property type="entry name" value="Ribosomal_uS8_B"/>
    <property type="match status" value="1"/>
</dbReference>
<dbReference type="InterPro" id="IPR000630">
    <property type="entry name" value="Ribosomal_uS8"/>
</dbReference>
<dbReference type="InterPro" id="IPR047863">
    <property type="entry name" value="Ribosomal_uS8_CS"/>
</dbReference>
<dbReference type="InterPro" id="IPR035987">
    <property type="entry name" value="Ribosomal_uS8_sf"/>
</dbReference>
<dbReference type="NCBIfam" id="NF001109">
    <property type="entry name" value="PRK00136.1"/>
    <property type="match status" value="1"/>
</dbReference>
<dbReference type="PANTHER" id="PTHR11758">
    <property type="entry name" value="40S RIBOSOMAL PROTEIN S15A"/>
    <property type="match status" value="1"/>
</dbReference>
<dbReference type="Pfam" id="PF00410">
    <property type="entry name" value="Ribosomal_S8"/>
    <property type="match status" value="1"/>
</dbReference>
<dbReference type="SUPFAM" id="SSF56047">
    <property type="entry name" value="Ribosomal protein S8"/>
    <property type="match status" value="1"/>
</dbReference>
<dbReference type="PROSITE" id="PS00053">
    <property type="entry name" value="RIBOSOMAL_S8"/>
    <property type="match status" value="1"/>
</dbReference>
<evidence type="ECO:0000255" key="1">
    <source>
        <dbReference type="HAMAP-Rule" id="MF_01302"/>
    </source>
</evidence>
<evidence type="ECO:0000305" key="2"/>
<sequence length="132" mass="14655">MVMTDPIADLLTRVRNANIARHEAVEIPASNIKKAIANIMLQEGYITDLEEYNDGAVPMLKITMKYGQNKERVITGLKRISKPGLRVYCRKDEVPKVLNGLGTAVISTSKGILPDKEARKLSIGGEVLCYIW</sequence>
<keyword id="KW-1185">Reference proteome</keyword>
<keyword id="KW-0687">Ribonucleoprotein</keyword>
<keyword id="KW-0689">Ribosomal protein</keyword>
<keyword id="KW-0694">RNA-binding</keyword>
<keyword id="KW-0699">rRNA-binding</keyword>
<accession>Q890P9</accession>
<comment type="function">
    <text evidence="1">One of the primary rRNA binding proteins, it binds directly to 16S rRNA central domain where it helps coordinate assembly of the platform of the 30S subunit.</text>
</comment>
<comment type="subunit">
    <text evidence="1">Part of the 30S ribosomal subunit. Contacts proteins S5 and S12.</text>
</comment>
<comment type="similarity">
    <text evidence="1">Belongs to the universal ribosomal protein uS8 family.</text>
</comment>
<proteinExistence type="inferred from homology"/>
<reference key="1">
    <citation type="journal article" date="2003" name="Proc. Natl. Acad. Sci. U.S.A.">
        <title>The genome sequence of Clostridium tetani, the causative agent of tetanus disease.</title>
        <authorList>
            <person name="Brueggemann H."/>
            <person name="Baeumer S."/>
            <person name="Fricke W.F."/>
            <person name="Wiezer A."/>
            <person name="Liesegang H."/>
            <person name="Decker I."/>
            <person name="Herzberg C."/>
            <person name="Martinez-Arias R."/>
            <person name="Merkl R."/>
            <person name="Henne A."/>
            <person name="Gottschalk G."/>
        </authorList>
    </citation>
    <scope>NUCLEOTIDE SEQUENCE [LARGE SCALE GENOMIC DNA]</scope>
    <source>
        <strain>Massachusetts / E88</strain>
    </source>
</reference>
<gene>
    <name evidence="1" type="primary">rpsH</name>
    <name type="ordered locus">CTC_02589</name>
</gene>
<organism>
    <name type="scientific">Clostridium tetani (strain Massachusetts / E88)</name>
    <dbReference type="NCBI Taxonomy" id="212717"/>
    <lineage>
        <taxon>Bacteria</taxon>
        <taxon>Bacillati</taxon>
        <taxon>Bacillota</taxon>
        <taxon>Clostridia</taxon>
        <taxon>Eubacteriales</taxon>
        <taxon>Clostridiaceae</taxon>
        <taxon>Clostridium</taxon>
    </lineage>
</organism>
<feature type="chain" id="PRO_0000126398" description="Small ribosomal subunit protein uS8">
    <location>
        <begin position="1"/>
        <end position="132"/>
    </location>
</feature>
<name>RS8_CLOTE</name>